<gene>
    <name evidence="1" type="primary">rpl3</name>
    <name type="ordered locus">PAE1970</name>
</gene>
<feature type="chain" id="PRO_0000077217" description="Large ribosomal subunit protein uL3">
    <location>
        <begin position="1"/>
        <end position="338"/>
    </location>
</feature>
<feature type="region of interest" description="Disordered" evidence="2">
    <location>
        <begin position="230"/>
        <end position="258"/>
    </location>
</feature>
<sequence>MGLKINRPRRGSMGVYPRKRAADIVPRVRTWPEVNLGKPALLGFAAYKAGMLHAVVVDDRPTSPLYGKEVVKAVTVLDAPPLYVWGFRLYTLDPTNGYKRAVAEVWASELPKFLHRVLTLPEKLDVDKQLKKVEEFRDVAVDVRALVATQPHLSGIGKKTPELLEIPIGGVPSVDERINFAISLLGKTVSPKDVFTPGQLVDVIAVTKGKGYQGVIKRFGVTILPRWHKHRKGHRRTGTIGPQAPAVMFTQPRPGQMGFHQRTEYNKRLLKIGENGAEITPKSGFPHYGVVKGPYILIQGSVPGARKRLVVLRHPVRPPRKAPPAAEPQVVWVSSQTL</sequence>
<organism>
    <name type="scientific">Pyrobaculum aerophilum (strain ATCC 51768 / DSM 7523 / JCM 9630 / CIP 104966 / NBRC 100827 / IM2)</name>
    <dbReference type="NCBI Taxonomy" id="178306"/>
    <lineage>
        <taxon>Archaea</taxon>
        <taxon>Thermoproteota</taxon>
        <taxon>Thermoprotei</taxon>
        <taxon>Thermoproteales</taxon>
        <taxon>Thermoproteaceae</taxon>
        <taxon>Pyrobaculum</taxon>
    </lineage>
</organism>
<comment type="function">
    <text evidence="1">One of the primary rRNA binding proteins, it binds directly near the 3'-end of the 23S rRNA, where it nucleates assembly of the 50S subunit.</text>
</comment>
<comment type="subunit">
    <text evidence="1">Part of the 50S ribosomal subunit. Forms a cluster with proteins L14 and L24e.</text>
</comment>
<comment type="similarity">
    <text evidence="1">Belongs to the universal ribosomal protein uL3 family.</text>
</comment>
<protein>
    <recommendedName>
        <fullName evidence="1">Large ribosomal subunit protein uL3</fullName>
    </recommendedName>
    <alternativeName>
        <fullName evidence="3">50S ribosomal protein L3</fullName>
    </alternativeName>
</protein>
<reference key="1">
    <citation type="journal article" date="2002" name="Proc. Natl. Acad. Sci. U.S.A.">
        <title>Genome sequence of the hyperthermophilic crenarchaeon Pyrobaculum aerophilum.</title>
        <authorList>
            <person name="Fitz-Gibbon S.T."/>
            <person name="Ladner H."/>
            <person name="Kim U.-J."/>
            <person name="Stetter K.O."/>
            <person name="Simon M.I."/>
            <person name="Miller J.H."/>
        </authorList>
    </citation>
    <scope>NUCLEOTIDE SEQUENCE [LARGE SCALE GENOMIC DNA]</scope>
    <source>
        <strain>ATCC 51768 / DSM 7523 / JCM 9630 / CIP 104966 / NBRC 100827 / IM2</strain>
    </source>
</reference>
<name>RL3_PYRAE</name>
<accession>Q8ZW52</accession>
<keyword id="KW-1185">Reference proteome</keyword>
<keyword id="KW-0687">Ribonucleoprotein</keyword>
<keyword id="KW-0689">Ribosomal protein</keyword>
<keyword id="KW-0694">RNA-binding</keyword>
<keyword id="KW-0699">rRNA-binding</keyword>
<dbReference type="EMBL" id="AE009441">
    <property type="protein sequence ID" value="AAL63850.1"/>
    <property type="molecule type" value="Genomic_DNA"/>
</dbReference>
<dbReference type="RefSeq" id="WP_011008321.1">
    <property type="nucleotide sequence ID" value="NC_003364.1"/>
</dbReference>
<dbReference type="SMR" id="Q8ZW52"/>
<dbReference type="FunCoup" id="Q8ZW52">
    <property type="interactions" value="130"/>
</dbReference>
<dbReference type="STRING" id="178306.PAE1970"/>
<dbReference type="EnsemblBacteria" id="AAL63850">
    <property type="protein sequence ID" value="AAL63850"/>
    <property type="gene ID" value="PAE1970"/>
</dbReference>
<dbReference type="GeneID" id="1464173"/>
<dbReference type="KEGG" id="pai:PAE1970"/>
<dbReference type="PATRIC" id="fig|178306.9.peg.1454"/>
<dbReference type="eggNOG" id="arCOG04070">
    <property type="taxonomic scope" value="Archaea"/>
</dbReference>
<dbReference type="HOGENOM" id="CLU_033361_2_0_2"/>
<dbReference type="InParanoid" id="Q8ZW52"/>
<dbReference type="Proteomes" id="UP000002439">
    <property type="component" value="Chromosome"/>
</dbReference>
<dbReference type="GO" id="GO:0022625">
    <property type="term" value="C:cytosolic large ribosomal subunit"/>
    <property type="evidence" value="ECO:0000318"/>
    <property type="project" value="GO_Central"/>
</dbReference>
<dbReference type="GO" id="GO:0003723">
    <property type="term" value="F:RNA binding"/>
    <property type="evidence" value="ECO:0000318"/>
    <property type="project" value="GO_Central"/>
</dbReference>
<dbReference type="GO" id="GO:0019843">
    <property type="term" value="F:rRNA binding"/>
    <property type="evidence" value="ECO:0007669"/>
    <property type="project" value="UniProtKB-UniRule"/>
</dbReference>
<dbReference type="GO" id="GO:0003735">
    <property type="term" value="F:structural constituent of ribosome"/>
    <property type="evidence" value="ECO:0000318"/>
    <property type="project" value="GO_Central"/>
</dbReference>
<dbReference type="GO" id="GO:0006412">
    <property type="term" value="P:translation"/>
    <property type="evidence" value="ECO:0000318"/>
    <property type="project" value="GO_Central"/>
</dbReference>
<dbReference type="Gene3D" id="3.30.1430.10">
    <property type="match status" value="1"/>
</dbReference>
<dbReference type="Gene3D" id="4.10.960.10">
    <property type="entry name" value="Ribosomal protein L3, domain 3"/>
    <property type="match status" value="1"/>
</dbReference>
<dbReference type="Gene3D" id="2.40.30.10">
    <property type="entry name" value="Translation factors"/>
    <property type="match status" value="1"/>
</dbReference>
<dbReference type="HAMAP" id="MF_01325_A">
    <property type="entry name" value="Ribosomal_uL3_A"/>
    <property type="match status" value="1"/>
</dbReference>
<dbReference type="InterPro" id="IPR045077">
    <property type="entry name" value="L3_arc_euk"/>
</dbReference>
<dbReference type="InterPro" id="IPR044892">
    <property type="entry name" value="Ribosomal_L3_dom_3_arc_sf"/>
</dbReference>
<dbReference type="InterPro" id="IPR000597">
    <property type="entry name" value="Ribosomal_uL3"/>
</dbReference>
<dbReference type="InterPro" id="IPR019928">
    <property type="entry name" value="Ribosomal_uL3_arc"/>
</dbReference>
<dbReference type="InterPro" id="IPR019926">
    <property type="entry name" value="Ribosomal_uL3_CS"/>
</dbReference>
<dbReference type="InterPro" id="IPR009000">
    <property type="entry name" value="Transl_B-barrel_sf"/>
</dbReference>
<dbReference type="NCBIfam" id="TIGR03626">
    <property type="entry name" value="L3_arch"/>
    <property type="match status" value="1"/>
</dbReference>
<dbReference type="NCBIfam" id="NF003261">
    <property type="entry name" value="PRK04231.1"/>
    <property type="match status" value="1"/>
</dbReference>
<dbReference type="PANTHER" id="PTHR11363">
    <property type="entry name" value="60S RIBOSOMAL PROTEIN L3-RELATED"/>
    <property type="match status" value="1"/>
</dbReference>
<dbReference type="PANTHER" id="PTHR11363:SF5">
    <property type="entry name" value="LARGE RIBOSOMAL SUBUNIT PROTEIN UL3"/>
    <property type="match status" value="1"/>
</dbReference>
<dbReference type="Pfam" id="PF00297">
    <property type="entry name" value="Ribosomal_L3"/>
    <property type="match status" value="1"/>
</dbReference>
<dbReference type="SUPFAM" id="SSF50447">
    <property type="entry name" value="Translation proteins"/>
    <property type="match status" value="1"/>
</dbReference>
<dbReference type="PROSITE" id="PS00474">
    <property type="entry name" value="RIBOSOMAL_L3"/>
    <property type="match status" value="1"/>
</dbReference>
<proteinExistence type="inferred from homology"/>
<evidence type="ECO:0000255" key="1">
    <source>
        <dbReference type="HAMAP-Rule" id="MF_01325"/>
    </source>
</evidence>
<evidence type="ECO:0000256" key="2">
    <source>
        <dbReference type="SAM" id="MobiDB-lite"/>
    </source>
</evidence>
<evidence type="ECO:0000305" key="3"/>